<feature type="chain" id="PRO_1000012535" description="UPF0122 protein MCAP_0480">
    <location>
        <begin position="1"/>
        <end position="113"/>
    </location>
</feature>
<reference key="1">
    <citation type="submission" date="2005-09" db="EMBL/GenBank/DDBJ databases">
        <authorList>
            <person name="Glass J.I."/>
            <person name="Lartigue C."/>
            <person name="Pfannkoch C."/>
            <person name="Baden-Tillson H."/>
            <person name="Smith H.O."/>
            <person name="Venter J.C."/>
            <person name="Roske K."/>
            <person name="Wise K.S."/>
            <person name="Calcutt M.J."/>
            <person name="Nelson W.C."/>
            <person name="Nierman W.C."/>
        </authorList>
    </citation>
    <scope>NUCLEOTIDE SEQUENCE [LARGE SCALE GENOMIC DNA]</scope>
    <source>
        <strain>California kid / ATCC 27343 / NCTC 10154</strain>
    </source>
</reference>
<gene>
    <name type="ordered locus">MCAP_0480</name>
</gene>
<name>Y480_MYCCT</name>
<protein>
    <recommendedName>
        <fullName evidence="1">UPF0122 protein MCAP_0480</fullName>
    </recommendedName>
</protein>
<accession>Q2SS09</accession>
<dbReference type="EMBL" id="CP000123">
    <property type="protein sequence ID" value="ABC01202.1"/>
    <property type="molecule type" value="Genomic_DNA"/>
</dbReference>
<dbReference type="RefSeq" id="WP_011387353.1">
    <property type="nucleotide sequence ID" value="NC_007633.1"/>
</dbReference>
<dbReference type="SMR" id="Q2SS09"/>
<dbReference type="GeneID" id="23778564"/>
<dbReference type="KEGG" id="mcp:MCAP_0480"/>
<dbReference type="HOGENOM" id="CLU_129218_1_1_14"/>
<dbReference type="PhylomeDB" id="Q2SS09"/>
<dbReference type="Proteomes" id="UP000001928">
    <property type="component" value="Chromosome"/>
</dbReference>
<dbReference type="Gene3D" id="1.10.10.10">
    <property type="entry name" value="Winged helix-like DNA-binding domain superfamily/Winged helix DNA-binding domain"/>
    <property type="match status" value="1"/>
</dbReference>
<dbReference type="HAMAP" id="MF_00245">
    <property type="entry name" value="UPF0122"/>
    <property type="match status" value="1"/>
</dbReference>
<dbReference type="InterPro" id="IPR013324">
    <property type="entry name" value="RNA_pol_sigma_r3/r4-like"/>
</dbReference>
<dbReference type="InterPro" id="IPR007394">
    <property type="entry name" value="UPF0122"/>
</dbReference>
<dbReference type="InterPro" id="IPR054831">
    <property type="entry name" value="UPF0122_fam_protein"/>
</dbReference>
<dbReference type="InterPro" id="IPR036388">
    <property type="entry name" value="WH-like_DNA-bd_sf"/>
</dbReference>
<dbReference type="NCBIfam" id="NF001075">
    <property type="entry name" value="PRK00118.2-6"/>
    <property type="match status" value="1"/>
</dbReference>
<dbReference type="NCBIfam" id="NF045758">
    <property type="entry name" value="YlxM"/>
    <property type="match status" value="1"/>
</dbReference>
<dbReference type="PANTHER" id="PTHR40083">
    <property type="entry name" value="UPF0122 PROTEIN CBO2450/CLC_2298"/>
    <property type="match status" value="1"/>
</dbReference>
<dbReference type="PANTHER" id="PTHR40083:SF1">
    <property type="entry name" value="UPF0122 PROTEIN YLXM"/>
    <property type="match status" value="1"/>
</dbReference>
<dbReference type="Pfam" id="PF04297">
    <property type="entry name" value="UPF0122"/>
    <property type="match status" value="1"/>
</dbReference>
<dbReference type="SUPFAM" id="SSF88659">
    <property type="entry name" value="Sigma3 and sigma4 domains of RNA polymerase sigma factors"/>
    <property type="match status" value="1"/>
</dbReference>
<organism>
    <name type="scientific">Mycoplasma capricolum subsp. capricolum (strain California kid / ATCC 27343 / NCTC 10154)</name>
    <dbReference type="NCBI Taxonomy" id="340047"/>
    <lineage>
        <taxon>Bacteria</taxon>
        <taxon>Bacillati</taxon>
        <taxon>Mycoplasmatota</taxon>
        <taxon>Mollicutes</taxon>
        <taxon>Mycoplasmataceae</taxon>
        <taxon>Mycoplasma</taxon>
    </lineage>
</organism>
<sequence>MKLKNNLLEKTLELSELFKIYKELLTDKQKQYFELYIDEDLSLSEIADEFNISKTAVYDSISKTSKLLFSLEKKLHLKQKEELLISLINKIETNQIDEKQFIKSLKEVIWWKY</sequence>
<comment type="function">
    <text evidence="1">Might take part in the signal recognition particle (SRP) pathway. This is inferred from the conservation of its genetic proximity to ftsY/ffh. May be a regulatory protein.</text>
</comment>
<comment type="similarity">
    <text evidence="1">Belongs to the UPF0122 family.</text>
</comment>
<proteinExistence type="inferred from homology"/>
<evidence type="ECO:0000255" key="1">
    <source>
        <dbReference type="HAMAP-Rule" id="MF_00245"/>
    </source>
</evidence>